<proteinExistence type="evidence at transcript level"/>
<protein>
    <recommendedName>
        <fullName>Metallothionein-like protein 4B</fullName>
        <shortName>MT-4B</shortName>
    </recommendedName>
    <alternativeName>
        <fullName>EC protein homolog 2</fullName>
    </alternativeName>
</protein>
<reference key="1">
    <citation type="journal article" date="1999" name="Nature">
        <title>Sequence and analysis of chromosome 2 of the plant Arabidopsis thaliana.</title>
        <authorList>
            <person name="Lin X."/>
            <person name="Kaul S."/>
            <person name="Rounsley S.D."/>
            <person name="Shea T.P."/>
            <person name="Benito M.-I."/>
            <person name="Town C.D."/>
            <person name="Fujii C.Y."/>
            <person name="Mason T.M."/>
            <person name="Bowman C.L."/>
            <person name="Barnstead M.E."/>
            <person name="Feldblyum T.V."/>
            <person name="Buell C.R."/>
            <person name="Ketchum K.A."/>
            <person name="Lee J.J."/>
            <person name="Ronning C.M."/>
            <person name="Koo H.L."/>
            <person name="Moffat K.S."/>
            <person name="Cronin L.A."/>
            <person name="Shen M."/>
            <person name="Pai G."/>
            <person name="Van Aken S."/>
            <person name="Umayam L."/>
            <person name="Tallon L.J."/>
            <person name="Gill J.E."/>
            <person name="Adams M.D."/>
            <person name="Carrera A.J."/>
            <person name="Creasy T.H."/>
            <person name="Goodman H.M."/>
            <person name="Somerville C.R."/>
            <person name="Copenhaver G.P."/>
            <person name="Preuss D."/>
            <person name="Nierman W.C."/>
            <person name="White O."/>
            <person name="Eisen J.A."/>
            <person name="Salzberg S.L."/>
            <person name="Fraser C.M."/>
            <person name="Venter J.C."/>
        </authorList>
    </citation>
    <scope>NUCLEOTIDE SEQUENCE [LARGE SCALE GENOMIC DNA]</scope>
    <source>
        <strain>cv. Columbia</strain>
    </source>
</reference>
<reference key="2">
    <citation type="journal article" date="2017" name="Plant J.">
        <title>Araport11: a complete reannotation of the Arabidopsis thaliana reference genome.</title>
        <authorList>
            <person name="Cheng C.Y."/>
            <person name="Krishnakumar V."/>
            <person name="Chan A.P."/>
            <person name="Thibaud-Nissen F."/>
            <person name="Schobel S."/>
            <person name="Town C.D."/>
        </authorList>
    </citation>
    <scope>GENOME REANNOTATION</scope>
    <source>
        <strain>cv. Columbia</strain>
    </source>
</reference>
<reference key="3">
    <citation type="journal article" date="1996" name="Plant J.">
        <title>Further progress towards a catalogue of all Arabidopsis genes: analysis of a set of 5000 non-redundant ESTs.</title>
        <authorList>
            <person name="Cooke R."/>
            <person name="Raynal M."/>
            <person name="Laudie M."/>
            <person name="Grellet F."/>
            <person name="Delseny M."/>
            <person name="Morris P.-C."/>
            <person name="Guerrier D."/>
            <person name="Giraudat J."/>
            <person name="Quigley F."/>
            <person name="Clabault G."/>
            <person name="Li Y.-F."/>
            <person name="Mache R."/>
            <person name="Krivitzky M."/>
            <person name="Gy I.J.-J."/>
            <person name="Kreis M."/>
            <person name="Lecharny A."/>
            <person name="Parmentier Y."/>
            <person name="Marbach J."/>
            <person name="Fleck J."/>
            <person name="Clement B."/>
            <person name="Philipps G."/>
            <person name="Herve C."/>
            <person name="Bardet C."/>
            <person name="Tremousaygue D."/>
            <person name="Lescure B."/>
            <person name="Lacomme C."/>
            <person name="Roby D."/>
            <person name="Jourjon M.-F."/>
            <person name="Chabrier P."/>
            <person name="Charpenteau J.-L."/>
            <person name="Desprez T."/>
            <person name="Amselem J."/>
            <person name="Chiapello H."/>
            <person name="Hoefte H."/>
        </authorList>
    </citation>
    <scope>NUCLEOTIDE SEQUENCE [LARGE SCALE MRNA] OF 2-85</scope>
    <source>
        <strain>cv. Columbia</strain>
        <tissue>Dry seed</tissue>
    </source>
</reference>
<reference key="4">
    <citation type="journal article" date="2008" name="Plant Physiol.">
        <title>Examining the specific contributions of individual Arabidopsis metallothioneins to copper distribution and metal tolerance.</title>
        <authorList>
            <person name="Guo W.J."/>
            <person name="Meetam M."/>
            <person name="Goldsbrough P.B."/>
        </authorList>
    </citation>
    <scope>FUNCTION</scope>
</reference>
<reference key="5">
    <citation type="journal article" date="2012" name="Plant Cell Environ.">
        <title>Type 4 metallothionein genes are involved in regulating Zn ion accumulation in late embryo and in controlling early seedling growth in Arabidopsis.</title>
        <authorList>
            <person name="Ren Y."/>
            <person name="Liu Y."/>
            <person name="Chen H."/>
            <person name="Li G."/>
            <person name="Zhang X."/>
            <person name="Zhao J."/>
        </authorList>
    </citation>
    <scope>FUNCTION</scope>
    <scope>SUBCELLULAR LOCATION</scope>
    <scope>TISSUE SPECIFICITY</scope>
    <scope>DEVELOPMENTAL STAGE</scope>
    <scope>INDUCTION</scope>
</reference>
<gene>
    <name type="primary">MT4B</name>
    <name type="ordered locus">At2g23240</name>
    <name type="ORF">T20D16.13</name>
</gene>
<sequence>MADTGKGSASASCNDRCGCPSPCPGGESCRCKMMSEASGGDQEHNTCPCGEHCGCNPCNCPKTQTQTSAKGCTCGEGCTCATCAA</sequence>
<comment type="function">
    <text evidence="2 3 4">Metallothioneins have a high content of cysteine residues that bind various heavy metals (Probable). Functions as a metal chelator of copper (Cu) and zinc (Zn) (PubMed:18287486). Plays a role in storing and distributing Zn ion in seed (PubMed:22014117).</text>
</comment>
<comment type="subcellular location">
    <subcellularLocation>
        <location evidence="3">Cytoplasm</location>
    </subcellularLocation>
    <subcellularLocation>
        <location evidence="3">Nucleus</location>
    </subcellularLocation>
    <subcellularLocation>
        <location evidence="3">Cell membrane</location>
    </subcellularLocation>
</comment>
<comment type="alternative products">
    <event type="alternative splicing"/>
    <isoform>
        <id>Q42377-1</id>
        <name>1</name>
        <sequence type="displayed"/>
    </isoform>
    <text>A number of isoforms are produced. According to EST sequences.</text>
</comment>
<comment type="tissue specificity">
    <text evidence="3">Expressed specifically in seeds.</text>
</comment>
<comment type="developmental stage">
    <text evidence="3">During embryo development, expressed from torpedo stage (6 days after pollination) to mature embryo.</text>
</comment>
<comment type="induction">
    <text evidence="3">By abscisic acid (ABA) and jasmonic acid. Down-regulated by gibberellin.</text>
</comment>
<comment type="miscellaneous">
    <text evidence="3">Plants silencing both MT4A and MT4B have reduced seed weight and reduced seedling growth after germination.</text>
</comment>
<comment type="similarity">
    <text evidence="4">Belongs to the metallothionein superfamily. Type 15 family.</text>
</comment>
<organism>
    <name type="scientific">Arabidopsis thaliana</name>
    <name type="common">Mouse-ear cress</name>
    <dbReference type="NCBI Taxonomy" id="3702"/>
    <lineage>
        <taxon>Eukaryota</taxon>
        <taxon>Viridiplantae</taxon>
        <taxon>Streptophyta</taxon>
        <taxon>Embryophyta</taxon>
        <taxon>Tracheophyta</taxon>
        <taxon>Spermatophyta</taxon>
        <taxon>Magnoliopsida</taxon>
        <taxon>eudicotyledons</taxon>
        <taxon>Gunneridae</taxon>
        <taxon>Pentapetalae</taxon>
        <taxon>rosids</taxon>
        <taxon>malvids</taxon>
        <taxon>Brassicales</taxon>
        <taxon>Brassicaceae</taxon>
        <taxon>Camelineae</taxon>
        <taxon>Arabidopsis</taxon>
    </lineage>
</organism>
<keyword id="KW-0025">Alternative splicing</keyword>
<keyword id="KW-1003">Cell membrane</keyword>
<keyword id="KW-0963">Cytoplasm</keyword>
<keyword id="KW-0472">Membrane</keyword>
<keyword id="KW-0479">Metal-binding</keyword>
<keyword id="KW-0480">Metal-thiolate cluster</keyword>
<keyword id="KW-0539">Nucleus</keyword>
<keyword id="KW-1185">Reference proteome</keyword>
<keyword id="KW-0862">Zinc</keyword>
<dbReference type="EMBL" id="AC002391">
    <property type="protein sequence ID" value="AAB87107.1"/>
    <property type="molecule type" value="Genomic_DNA"/>
</dbReference>
<dbReference type="EMBL" id="CP002685">
    <property type="protein sequence ID" value="AEC07432.1"/>
    <property type="molecule type" value="Genomic_DNA"/>
</dbReference>
<dbReference type="EMBL" id="Z27049">
    <property type="protein sequence ID" value="CAA81575.1"/>
    <property type="molecule type" value="mRNA"/>
</dbReference>
<dbReference type="EMBL" id="Z29896">
    <property type="protein sequence ID" value="CAA82835.1"/>
    <property type="molecule type" value="mRNA"/>
</dbReference>
<dbReference type="PIR" id="T00508">
    <property type="entry name" value="T00508"/>
</dbReference>
<dbReference type="RefSeq" id="NP_179905.1">
    <molecule id="Q42377-1"/>
    <property type="nucleotide sequence ID" value="NM_127888.2"/>
</dbReference>
<dbReference type="SMR" id="Q42377"/>
<dbReference type="STRING" id="3702.Q42377"/>
<dbReference type="PaxDb" id="3702-AT2G23240.1"/>
<dbReference type="EnsemblPlants" id="AT2G23240.1">
    <molecule id="Q42377-1"/>
    <property type="protein sequence ID" value="AT2G23240.1"/>
    <property type="gene ID" value="AT2G23240"/>
</dbReference>
<dbReference type="GeneID" id="816856"/>
<dbReference type="Gramene" id="AT2G23240.1">
    <molecule id="Q42377-1"/>
    <property type="protein sequence ID" value="AT2G23240.1"/>
    <property type="gene ID" value="AT2G23240"/>
</dbReference>
<dbReference type="KEGG" id="ath:AT2G23240"/>
<dbReference type="Araport" id="AT2G23240"/>
<dbReference type="TAIR" id="AT2G23240">
    <property type="gene designation" value="ATMT4B"/>
</dbReference>
<dbReference type="eggNOG" id="ENOG502S74E">
    <property type="taxonomic scope" value="Eukaryota"/>
</dbReference>
<dbReference type="HOGENOM" id="CLU_166374_0_0_1"/>
<dbReference type="InParanoid" id="Q42377"/>
<dbReference type="OMA" id="NCNCASC"/>
<dbReference type="PhylomeDB" id="Q42377"/>
<dbReference type="PRO" id="PR:Q42377"/>
<dbReference type="Proteomes" id="UP000006548">
    <property type="component" value="Chromosome 2"/>
</dbReference>
<dbReference type="ExpressionAtlas" id="Q42377">
    <property type="expression patterns" value="baseline and differential"/>
</dbReference>
<dbReference type="GO" id="GO:0005737">
    <property type="term" value="C:cytoplasm"/>
    <property type="evidence" value="ECO:0000314"/>
    <property type="project" value="TAIR"/>
</dbReference>
<dbReference type="GO" id="GO:0016020">
    <property type="term" value="C:membrane"/>
    <property type="evidence" value="ECO:0000314"/>
    <property type="project" value="TAIR"/>
</dbReference>
<dbReference type="GO" id="GO:0005634">
    <property type="term" value="C:nucleus"/>
    <property type="evidence" value="ECO:0000314"/>
    <property type="project" value="TAIR"/>
</dbReference>
<dbReference type="GO" id="GO:0005886">
    <property type="term" value="C:plasma membrane"/>
    <property type="evidence" value="ECO:0007669"/>
    <property type="project" value="UniProtKB-SubCell"/>
</dbReference>
<dbReference type="GO" id="GO:0008270">
    <property type="term" value="F:zinc ion binding"/>
    <property type="evidence" value="ECO:0007669"/>
    <property type="project" value="InterPro"/>
</dbReference>
<dbReference type="GO" id="GO:0006829">
    <property type="term" value="P:zinc ion transport"/>
    <property type="evidence" value="ECO:0000315"/>
    <property type="project" value="TAIR"/>
</dbReference>
<dbReference type="InterPro" id="IPR000316">
    <property type="entry name" value="Metallthion_15"/>
</dbReference>
<dbReference type="PANTHER" id="PTHR48198">
    <property type="entry name" value="EC PROTEIN HOMOLOG"/>
    <property type="match status" value="1"/>
</dbReference>
<dbReference type="PANTHER" id="PTHR48198:SF1">
    <property type="entry name" value="METALLOTHIONEIN-LIKE PROTEIN 4A-RELATED"/>
    <property type="match status" value="1"/>
</dbReference>
<dbReference type="Pfam" id="PF02068">
    <property type="entry name" value="Metallothio_PEC"/>
    <property type="match status" value="1"/>
</dbReference>
<dbReference type="PRINTS" id="PR00877">
    <property type="entry name" value="MTPLANTPEC"/>
</dbReference>
<evidence type="ECO:0000256" key="1">
    <source>
        <dbReference type="SAM" id="MobiDB-lite"/>
    </source>
</evidence>
<evidence type="ECO:0000269" key="2">
    <source>
    </source>
</evidence>
<evidence type="ECO:0000269" key="3">
    <source>
    </source>
</evidence>
<evidence type="ECO:0000305" key="4"/>
<feature type="chain" id="PRO_0000197424" description="Metallothionein-like protein 4B">
    <location>
        <begin position="1"/>
        <end position="85"/>
    </location>
</feature>
<feature type="region of interest" description="Disordered" evidence="1">
    <location>
        <begin position="1"/>
        <end position="20"/>
    </location>
</feature>
<accession>Q42377</accession>
<accession>Q9SLN4</accession>
<name>MT4B_ARATH</name>